<gene>
    <name evidence="1" type="primary">tatA</name>
    <name type="ordered locus">DIP1242</name>
</gene>
<name>TATA_CORDI</name>
<organism>
    <name type="scientific">Corynebacterium diphtheriae (strain ATCC 700971 / NCTC 13129 / Biotype gravis)</name>
    <dbReference type="NCBI Taxonomy" id="257309"/>
    <lineage>
        <taxon>Bacteria</taxon>
        <taxon>Bacillati</taxon>
        <taxon>Actinomycetota</taxon>
        <taxon>Actinomycetes</taxon>
        <taxon>Mycobacteriales</taxon>
        <taxon>Corynebacteriaceae</taxon>
        <taxon>Corynebacterium</taxon>
    </lineage>
</organism>
<sequence>MNLGPTEILLILVIVVLLFGAKKLPDAARSLGRSMRIFKSEVKEMSNDDQRYEEQQQQRQIAAQAQQQVVNPVEIPQPQPTDIQRPQQ</sequence>
<proteinExistence type="inferred from homology"/>
<reference key="1">
    <citation type="journal article" date="2003" name="Nucleic Acids Res.">
        <title>The complete genome sequence and analysis of Corynebacterium diphtheriae NCTC13129.</title>
        <authorList>
            <person name="Cerdeno-Tarraga A.-M."/>
            <person name="Efstratiou A."/>
            <person name="Dover L.G."/>
            <person name="Holden M.T.G."/>
            <person name="Pallen M.J."/>
            <person name="Bentley S.D."/>
            <person name="Besra G.S."/>
            <person name="Churcher C.M."/>
            <person name="James K.D."/>
            <person name="De Zoysa A."/>
            <person name="Chillingworth T."/>
            <person name="Cronin A."/>
            <person name="Dowd L."/>
            <person name="Feltwell T."/>
            <person name="Hamlin N."/>
            <person name="Holroyd S."/>
            <person name="Jagels K."/>
            <person name="Moule S."/>
            <person name="Quail M.A."/>
            <person name="Rabbinowitsch E."/>
            <person name="Rutherford K.M."/>
            <person name="Thomson N.R."/>
            <person name="Unwin L."/>
            <person name="Whitehead S."/>
            <person name="Barrell B.G."/>
            <person name="Parkhill J."/>
        </authorList>
    </citation>
    <scope>NUCLEOTIDE SEQUENCE [LARGE SCALE GENOMIC DNA]</scope>
    <source>
        <strain>ATCC 700971 / NCTC 13129 / Biotype gravis</strain>
    </source>
</reference>
<dbReference type="EMBL" id="BX248357">
    <property type="protein sequence ID" value="CAE49771.1"/>
    <property type="molecule type" value="Genomic_DNA"/>
</dbReference>
<dbReference type="RefSeq" id="WP_003851463.1">
    <property type="nucleotide sequence ID" value="NC_002935.2"/>
</dbReference>
<dbReference type="SMR" id="Q6NH98"/>
<dbReference type="STRING" id="257309.DIP1242"/>
<dbReference type="GeneID" id="97332005"/>
<dbReference type="KEGG" id="cdi:DIP1242"/>
<dbReference type="HOGENOM" id="CLU_086034_4_0_11"/>
<dbReference type="Proteomes" id="UP000002198">
    <property type="component" value="Chromosome"/>
</dbReference>
<dbReference type="GO" id="GO:0033281">
    <property type="term" value="C:TAT protein transport complex"/>
    <property type="evidence" value="ECO:0007669"/>
    <property type="project" value="UniProtKB-UniRule"/>
</dbReference>
<dbReference type="GO" id="GO:0008320">
    <property type="term" value="F:protein transmembrane transporter activity"/>
    <property type="evidence" value="ECO:0007669"/>
    <property type="project" value="UniProtKB-UniRule"/>
</dbReference>
<dbReference type="GO" id="GO:0043953">
    <property type="term" value="P:protein transport by the Tat complex"/>
    <property type="evidence" value="ECO:0007669"/>
    <property type="project" value="UniProtKB-UniRule"/>
</dbReference>
<dbReference type="Gene3D" id="1.20.5.3310">
    <property type="match status" value="1"/>
</dbReference>
<dbReference type="HAMAP" id="MF_00236">
    <property type="entry name" value="TatA_E"/>
    <property type="match status" value="1"/>
</dbReference>
<dbReference type="InterPro" id="IPR003369">
    <property type="entry name" value="TatA/B/E"/>
</dbReference>
<dbReference type="InterPro" id="IPR006312">
    <property type="entry name" value="TatA/E"/>
</dbReference>
<dbReference type="NCBIfam" id="NF001854">
    <property type="entry name" value="PRK00575.1"/>
    <property type="match status" value="1"/>
</dbReference>
<dbReference type="NCBIfam" id="TIGR01411">
    <property type="entry name" value="tatAE"/>
    <property type="match status" value="1"/>
</dbReference>
<dbReference type="PANTHER" id="PTHR42982">
    <property type="entry name" value="SEC-INDEPENDENT PROTEIN TRANSLOCASE PROTEIN TATA"/>
    <property type="match status" value="1"/>
</dbReference>
<dbReference type="PANTHER" id="PTHR42982:SF8">
    <property type="entry name" value="SEC-INDEPENDENT PROTEIN TRANSLOCASE PROTEIN TATA"/>
    <property type="match status" value="1"/>
</dbReference>
<dbReference type="Pfam" id="PF02416">
    <property type="entry name" value="TatA_B_E"/>
    <property type="match status" value="1"/>
</dbReference>
<evidence type="ECO:0000255" key="1">
    <source>
        <dbReference type="HAMAP-Rule" id="MF_00236"/>
    </source>
</evidence>
<evidence type="ECO:0000256" key="2">
    <source>
        <dbReference type="SAM" id="MobiDB-lite"/>
    </source>
</evidence>
<accession>Q6NH98</accession>
<protein>
    <recommendedName>
        <fullName evidence="1">Sec-independent protein translocase protein TatA</fullName>
    </recommendedName>
</protein>
<feature type="chain" id="PRO_1000044380" description="Sec-independent protein translocase protein TatA">
    <location>
        <begin position="1"/>
        <end position="88"/>
    </location>
</feature>
<feature type="transmembrane region" description="Helical" evidence="1">
    <location>
        <begin position="1"/>
        <end position="21"/>
    </location>
</feature>
<feature type="region of interest" description="Disordered" evidence="2">
    <location>
        <begin position="46"/>
        <end position="88"/>
    </location>
</feature>
<feature type="compositionally biased region" description="Basic and acidic residues" evidence="2">
    <location>
        <begin position="46"/>
        <end position="56"/>
    </location>
</feature>
<feature type="compositionally biased region" description="Low complexity" evidence="2">
    <location>
        <begin position="57"/>
        <end position="68"/>
    </location>
</feature>
<keyword id="KW-1003">Cell membrane</keyword>
<keyword id="KW-0472">Membrane</keyword>
<keyword id="KW-0653">Protein transport</keyword>
<keyword id="KW-1185">Reference proteome</keyword>
<keyword id="KW-0811">Translocation</keyword>
<keyword id="KW-0812">Transmembrane</keyword>
<keyword id="KW-1133">Transmembrane helix</keyword>
<keyword id="KW-0813">Transport</keyword>
<comment type="function">
    <text evidence="1">Part of the twin-arginine translocation (Tat) system that transports large folded proteins containing a characteristic twin-arginine motif in their signal peptide across membranes. TatA could form the protein-conducting channel of the Tat system.</text>
</comment>
<comment type="subunit">
    <text evidence="1">The Tat system comprises two distinct complexes: a TatABC complex, containing multiple copies of TatA, TatB and TatC subunits, and a separate TatA complex, containing only TatA subunits. Substrates initially bind to the TatABC complex, which probably triggers association of the separate TatA complex to form the active translocon.</text>
</comment>
<comment type="subcellular location">
    <subcellularLocation>
        <location evidence="1">Cell membrane</location>
        <topology evidence="1">Single-pass membrane protein</topology>
    </subcellularLocation>
</comment>
<comment type="similarity">
    <text evidence="1">Belongs to the TatA/E family.</text>
</comment>